<organism>
    <name type="scientific">Spinacia oleracea</name>
    <name type="common">Spinach</name>
    <dbReference type="NCBI Taxonomy" id="3562"/>
    <lineage>
        <taxon>Eukaryota</taxon>
        <taxon>Viridiplantae</taxon>
        <taxon>Streptophyta</taxon>
        <taxon>Embryophyta</taxon>
        <taxon>Tracheophyta</taxon>
        <taxon>Spermatophyta</taxon>
        <taxon>Magnoliopsida</taxon>
        <taxon>eudicotyledons</taxon>
        <taxon>Gunneridae</taxon>
        <taxon>Pentapetalae</taxon>
        <taxon>Caryophyllales</taxon>
        <taxon>Chenopodiaceae</taxon>
        <taxon>Chenopodioideae</taxon>
        <taxon>Anserineae</taxon>
        <taxon>Spinacia</taxon>
    </lineage>
</organism>
<accession>A0A0K9RL25</accession>
<sequence>MAAKPAIIALFDVDGTLTAPRKEVTPEMLKFMKELRKVVPVGVVGGSDLTKISEQLGKTVINDYDYVFAENGLVAYKDGAEVAIMSLKKLLGEEKLKEFINFTLKYIAELDIPIKRGTFIEFRNGMINVSPIGRNCSQEERDEFEKYDKIQKVRSTMVSVLREKFGHFNLTFSIGGQISFDVFPRGWDKTYSLRYLEDFNEIHFFGDKTFEGGNDYEIFASERTVGHTVTSPEDTMKQCTEIFLTKKE</sequence>
<keyword id="KW-0963">Cytoplasm</keyword>
<keyword id="KW-0413">Isomerase</keyword>
<keyword id="KW-0460">Magnesium</keyword>
<keyword id="KW-0479">Metal-binding</keyword>
<keyword id="KW-1185">Reference proteome</keyword>
<dbReference type="EC" id="5.4.2.8" evidence="4"/>
<dbReference type="EMBL" id="KQ139255">
    <property type="protein sequence ID" value="KNA20221.1"/>
    <property type="molecule type" value="Genomic_DNA"/>
</dbReference>
<dbReference type="SMR" id="A0A0K9RL25"/>
<dbReference type="STRING" id="3562.A0A0K9RL25"/>
<dbReference type="OrthoDB" id="10264771at2759"/>
<dbReference type="BioCyc" id="MetaCyc:MONOMER-2303"/>
<dbReference type="UniPathway" id="UPA00126">
    <property type="reaction ID" value="UER00424"/>
</dbReference>
<dbReference type="Proteomes" id="UP001155700">
    <property type="component" value="Unplaced"/>
</dbReference>
<dbReference type="GO" id="GO:0005829">
    <property type="term" value="C:cytosol"/>
    <property type="evidence" value="ECO:0000318"/>
    <property type="project" value="GO_Central"/>
</dbReference>
<dbReference type="GO" id="GO:0046872">
    <property type="term" value="F:metal ion binding"/>
    <property type="evidence" value="ECO:0007669"/>
    <property type="project" value="UniProtKB-KW"/>
</dbReference>
<dbReference type="GO" id="GO:0004615">
    <property type="term" value="F:phosphomannomutase activity"/>
    <property type="evidence" value="ECO:0000314"/>
    <property type="project" value="UniProtKB"/>
</dbReference>
<dbReference type="GO" id="GO:0009298">
    <property type="term" value="P:GDP-mannose biosynthetic process"/>
    <property type="evidence" value="ECO:0000314"/>
    <property type="project" value="UniProtKB"/>
</dbReference>
<dbReference type="GO" id="GO:0006013">
    <property type="term" value="P:mannose metabolic process"/>
    <property type="evidence" value="ECO:0000318"/>
    <property type="project" value="GO_Central"/>
</dbReference>
<dbReference type="GO" id="GO:0006487">
    <property type="term" value="P:protein N-linked glycosylation"/>
    <property type="evidence" value="ECO:0000318"/>
    <property type="project" value="GO_Central"/>
</dbReference>
<dbReference type="CDD" id="cd02585">
    <property type="entry name" value="HAD_PMM"/>
    <property type="match status" value="1"/>
</dbReference>
<dbReference type="FunFam" id="3.30.1240.20:FF:000001">
    <property type="entry name" value="Phosphomannomutase"/>
    <property type="match status" value="1"/>
</dbReference>
<dbReference type="Gene3D" id="3.30.1240.20">
    <property type="match status" value="1"/>
</dbReference>
<dbReference type="Gene3D" id="3.40.50.1000">
    <property type="entry name" value="HAD superfamily/HAD-like"/>
    <property type="match status" value="1"/>
</dbReference>
<dbReference type="InterPro" id="IPR036412">
    <property type="entry name" value="HAD-like_sf"/>
</dbReference>
<dbReference type="InterPro" id="IPR006379">
    <property type="entry name" value="HAD-SF_hydro_IIB"/>
</dbReference>
<dbReference type="InterPro" id="IPR023214">
    <property type="entry name" value="HAD_sf"/>
</dbReference>
<dbReference type="InterPro" id="IPR005002">
    <property type="entry name" value="PMM"/>
</dbReference>
<dbReference type="InterPro" id="IPR043169">
    <property type="entry name" value="PMM_cap"/>
</dbReference>
<dbReference type="NCBIfam" id="TIGR01484">
    <property type="entry name" value="HAD-SF-IIB"/>
    <property type="match status" value="1"/>
</dbReference>
<dbReference type="PANTHER" id="PTHR10466">
    <property type="entry name" value="PHOSPHOMANNOMUTASE"/>
    <property type="match status" value="1"/>
</dbReference>
<dbReference type="PANTHER" id="PTHR10466:SF0">
    <property type="entry name" value="PHOSPHOMANNOMUTASE"/>
    <property type="match status" value="1"/>
</dbReference>
<dbReference type="Pfam" id="PF03332">
    <property type="entry name" value="PMM"/>
    <property type="match status" value="1"/>
</dbReference>
<dbReference type="SFLD" id="SFLDF00445">
    <property type="entry name" value="alpha-phosphomannomutase"/>
    <property type="match status" value="1"/>
</dbReference>
<dbReference type="SFLD" id="SFLDS00003">
    <property type="entry name" value="Haloacid_Dehalogenase"/>
    <property type="match status" value="1"/>
</dbReference>
<dbReference type="SUPFAM" id="SSF56784">
    <property type="entry name" value="HAD-like"/>
    <property type="match status" value="1"/>
</dbReference>
<comment type="function">
    <text evidence="4 6">Catalyzes the interconversion of mannose-6-phosphate to mannose-1-phosphate, the precursor for the synthesis of GDP-mannose (PubMed:9003801). GDP-mannose is an essential sugar nucleotide for the synthesis of D-mannose-containing cell wall polysaccharides (galactomannans and glucomannans), glycolipids, glycoproteins and the antioxidant L-ascorbate (Probable).</text>
</comment>
<comment type="catalytic activity">
    <reaction evidence="4">
        <text>alpha-D-mannose 1-phosphate = D-mannose 6-phosphate</text>
        <dbReference type="Rhea" id="RHEA:11140"/>
        <dbReference type="ChEBI" id="CHEBI:58409"/>
        <dbReference type="ChEBI" id="CHEBI:58735"/>
        <dbReference type="EC" id="5.4.2.8"/>
    </reaction>
</comment>
<comment type="cofactor">
    <cofactor evidence="3">
        <name>Mg(2+)</name>
        <dbReference type="ChEBI" id="CHEBI:18420"/>
    </cofactor>
</comment>
<comment type="pathway">
    <text evidence="6">Nucleotide-sugar biosynthesis; GDP-alpha-D-mannose biosynthesis; alpha-D-mannose 1-phosphate from D-fructose 6-phosphate: step 2/2.</text>
</comment>
<comment type="subunit">
    <text evidence="3">Homodimer.</text>
</comment>
<comment type="subcellular location">
    <subcellularLocation>
        <location evidence="1">Cytoplasm</location>
    </subcellularLocation>
</comment>
<comment type="similarity">
    <text evidence="6">Belongs to the eukaryotic PMM family.</text>
</comment>
<proteinExistence type="evidence at protein level"/>
<gene>
    <name evidence="6" type="primary">PMM</name>
    <name evidence="7" type="ORF">SOVF_054170</name>
</gene>
<reference key="1">
    <citation type="journal article" date="2014" name="Nature">
        <title>The genome of the recently domesticated crop plant sugar beet (Beta vulgaris).</title>
        <authorList>
            <person name="Dohm J.C."/>
            <person name="Minoche A.E."/>
            <person name="Holtgraewe D."/>
            <person name="Capella-Gutierrez S."/>
            <person name="Zakrzewski F."/>
            <person name="Tafer H."/>
            <person name="Rupp O."/>
            <person name="Soerensen T.R."/>
            <person name="Stracke R."/>
            <person name="Reinhardt R."/>
            <person name="Goesmann A."/>
            <person name="Kraft T."/>
            <person name="Schulz B."/>
            <person name="Stadler P.F."/>
            <person name="Schmidt T."/>
            <person name="Gabaldon T."/>
            <person name="Lehrach H."/>
            <person name="Weisshaar B."/>
            <person name="Himmelbauer H."/>
        </authorList>
    </citation>
    <scope>NUCLEOTIDE SEQUENCE [LARGE SCALE GENOMIC DNA]</scope>
    <source>
        <strain>cv. Viroflay</strain>
    </source>
</reference>
<reference key="2">
    <citation type="journal article" date="1997" name="FEBS Lett.">
        <title>The reaction mechanism of phosphomannomutase in plants.</title>
        <authorList>
            <person name="Oesterhelt C."/>
            <person name="Schnarrenberger C."/>
            <person name="Gross W."/>
        </authorList>
    </citation>
    <scope>FUNCTION</scope>
    <scope>CATALYTIC ACTIVITY</scope>
    <scope>COFACTOR</scope>
</reference>
<evidence type="ECO:0000250" key="1">
    <source>
        <dbReference type="UniProtKB" id="A0A0U1WZ18"/>
    </source>
</evidence>
<evidence type="ECO:0000250" key="2">
    <source>
        <dbReference type="UniProtKB" id="P31353"/>
    </source>
</evidence>
<evidence type="ECO:0000250" key="3">
    <source>
        <dbReference type="UniProtKB" id="Q92871"/>
    </source>
</evidence>
<evidence type="ECO:0000269" key="4">
    <source>
    </source>
</evidence>
<evidence type="ECO:0000303" key="5">
    <source>
    </source>
</evidence>
<evidence type="ECO:0000305" key="6"/>
<evidence type="ECO:0000312" key="7">
    <source>
        <dbReference type="EMBL" id="KNA20221.1"/>
    </source>
</evidence>
<protein>
    <recommendedName>
        <fullName evidence="5">Phosphomannomutase</fullName>
        <ecNumber evidence="4">5.4.2.8</ecNumber>
    </recommendedName>
</protein>
<feature type="chain" id="PRO_0000451444" description="Phosphomannomutase">
    <location>
        <begin position="1"/>
        <end position="248"/>
    </location>
</feature>
<feature type="active site" description="Nucleophile" evidence="3">
    <location>
        <position position="12"/>
    </location>
</feature>
<feature type="active site" description="Proton donor/acceptor" evidence="3">
    <location>
        <position position="14"/>
    </location>
</feature>
<feature type="binding site" evidence="3">
    <location>
        <position position="12"/>
    </location>
    <ligand>
        <name>Mg(2+)</name>
        <dbReference type="ChEBI" id="CHEBI:18420"/>
        <label>1</label>
    </ligand>
</feature>
<feature type="binding site" evidence="3">
    <location>
        <position position="14"/>
    </location>
    <ligand>
        <name>Mg(2+)</name>
        <dbReference type="ChEBI" id="CHEBI:18420"/>
        <label>1</label>
    </ligand>
</feature>
<feature type="binding site" evidence="3">
    <location>
        <position position="21"/>
    </location>
    <ligand>
        <name>alpha-D-mannose 1-phosphate</name>
        <dbReference type="ChEBI" id="CHEBI:58409"/>
    </ligand>
</feature>
<feature type="binding site" evidence="3">
    <location>
        <position position="123"/>
    </location>
    <ligand>
        <name>alpha-D-mannose 1-phosphate</name>
        <dbReference type="ChEBI" id="CHEBI:58409"/>
    </ligand>
</feature>
<feature type="binding site" evidence="3">
    <location>
        <position position="134"/>
    </location>
    <ligand>
        <name>alpha-D-mannose 1-phosphate</name>
        <dbReference type="ChEBI" id="CHEBI:58409"/>
    </ligand>
</feature>
<feature type="binding site" evidence="3">
    <location>
        <position position="141"/>
    </location>
    <ligand>
        <name>alpha-D-mannose 1-phosphate</name>
        <dbReference type="ChEBI" id="CHEBI:58409"/>
    </ligand>
</feature>
<feature type="binding site" evidence="3">
    <location>
        <position position="179"/>
    </location>
    <ligand>
        <name>alpha-D-mannose 1-phosphate</name>
        <dbReference type="ChEBI" id="CHEBI:58409"/>
    </ligand>
</feature>
<feature type="binding site" evidence="3">
    <location>
        <position position="181"/>
    </location>
    <ligand>
        <name>alpha-D-mannose 1-phosphate</name>
        <dbReference type="ChEBI" id="CHEBI:58409"/>
    </ligand>
</feature>
<feature type="binding site" evidence="2">
    <location>
        <position position="207"/>
    </location>
    <ligand>
        <name>Mg(2+)</name>
        <dbReference type="ChEBI" id="CHEBI:18420"/>
        <label>1</label>
    </ligand>
</feature>
<feature type="binding site" evidence="3">
    <location>
        <position position="219"/>
    </location>
    <ligand>
        <name>Mg(2+)</name>
        <dbReference type="ChEBI" id="CHEBI:18420"/>
        <label>2</label>
    </ligand>
</feature>
<feature type="binding site" evidence="3">
    <location>
        <position position="224"/>
    </location>
    <ligand>
        <name>Mg(2+)</name>
        <dbReference type="ChEBI" id="CHEBI:18420"/>
        <label>2</label>
    </ligand>
</feature>
<name>PMM_SPIOL</name>